<evidence type="ECO:0000255" key="1">
    <source>
        <dbReference type="HAMAP-Rule" id="MF_00687"/>
    </source>
</evidence>
<comment type="function">
    <text evidence="1">Catalyzes the isomerization of 5-dehydro-4-deoxy-D-glucuronate to 3-deoxy-D-glycero-2,5-hexodiulosonate.</text>
</comment>
<comment type="catalytic activity">
    <reaction evidence="1">
        <text>5-dehydro-4-deoxy-D-glucuronate = 3-deoxy-D-glycero-2,5-hexodiulosonate</text>
        <dbReference type="Rhea" id="RHEA:23896"/>
        <dbReference type="ChEBI" id="CHEBI:17117"/>
        <dbReference type="ChEBI" id="CHEBI:29071"/>
        <dbReference type="EC" id="5.3.1.17"/>
    </reaction>
</comment>
<comment type="cofactor">
    <cofactor evidence="1">
        <name>Zn(2+)</name>
        <dbReference type="ChEBI" id="CHEBI:29105"/>
    </cofactor>
    <text evidence="1">Binds 1 zinc ion per subunit.</text>
</comment>
<comment type="pathway">
    <text evidence="1">Glycan metabolism; pectin degradation; 2-dehydro-3-deoxy-D-gluconate from pectin: step 4/5.</text>
</comment>
<comment type="similarity">
    <text evidence="1">Belongs to the KduI family.</text>
</comment>
<proteinExistence type="inferred from homology"/>
<gene>
    <name evidence="1" type="primary">kduI</name>
    <name type="ordered locus">OB2813</name>
</gene>
<dbReference type="EC" id="5.3.1.17" evidence="1"/>
<dbReference type="EMBL" id="BA000028">
    <property type="protein sequence ID" value="BAC14769.1"/>
    <property type="molecule type" value="Genomic_DNA"/>
</dbReference>
<dbReference type="RefSeq" id="WP_011067209.1">
    <property type="nucleotide sequence ID" value="NC_004193.1"/>
</dbReference>
<dbReference type="SMR" id="Q8EMM9"/>
<dbReference type="STRING" id="221109.gene:10735065"/>
<dbReference type="KEGG" id="oih:OB2813"/>
<dbReference type="eggNOG" id="COG3717">
    <property type="taxonomic scope" value="Bacteria"/>
</dbReference>
<dbReference type="HOGENOM" id="CLU_062609_0_0_9"/>
<dbReference type="OrthoDB" id="9770644at2"/>
<dbReference type="PhylomeDB" id="Q8EMM9"/>
<dbReference type="UniPathway" id="UPA00545">
    <property type="reaction ID" value="UER00826"/>
</dbReference>
<dbReference type="Proteomes" id="UP000000822">
    <property type="component" value="Chromosome"/>
</dbReference>
<dbReference type="GO" id="GO:0008697">
    <property type="term" value="F:4-deoxy-L-threo-5-hexosulose-uronate ketol-isomerase activity"/>
    <property type="evidence" value="ECO:0007669"/>
    <property type="project" value="UniProtKB-UniRule"/>
</dbReference>
<dbReference type="GO" id="GO:0008270">
    <property type="term" value="F:zinc ion binding"/>
    <property type="evidence" value="ECO:0007669"/>
    <property type="project" value="UniProtKB-UniRule"/>
</dbReference>
<dbReference type="GO" id="GO:0019698">
    <property type="term" value="P:D-galacturonate catabolic process"/>
    <property type="evidence" value="ECO:0007669"/>
    <property type="project" value="TreeGrafter"/>
</dbReference>
<dbReference type="GO" id="GO:0042840">
    <property type="term" value="P:D-glucuronate catabolic process"/>
    <property type="evidence" value="ECO:0007669"/>
    <property type="project" value="TreeGrafter"/>
</dbReference>
<dbReference type="GO" id="GO:0045490">
    <property type="term" value="P:pectin catabolic process"/>
    <property type="evidence" value="ECO:0007669"/>
    <property type="project" value="UniProtKB-UniRule"/>
</dbReference>
<dbReference type="CDD" id="cd20491">
    <property type="entry name" value="cupin_KduI_C"/>
    <property type="match status" value="1"/>
</dbReference>
<dbReference type="CDD" id="cd20294">
    <property type="entry name" value="cupin_KduI_N"/>
    <property type="match status" value="1"/>
</dbReference>
<dbReference type="Gene3D" id="2.60.120.10">
    <property type="entry name" value="Jelly Rolls"/>
    <property type="match status" value="1"/>
</dbReference>
<dbReference type="Gene3D" id="2.60.120.520">
    <property type="entry name" value="pectin degrading enzyme 5-keto 4- deoxyuronate isomerase, domain 1"/>
    <property type="match status" value="1"/>
</dbReference>
<dbReference type="HAMAP" id="MF_00687">
    <property type="entry name" value="KduI"/>
    <property type="match status" value="1"/>
</dbReference>
<dbReference type="InterPro" id="IPR007045">
    <property type="entry name" value="KduI"/>
</dbReference>
<dbReference type="InterPro" id="IPR021120">
    <property type="entry name" value="KduI/IolB_isomerase"/>
</dbReference>
<dbReference type="InterPro" id="IPR027449">
    <property type="entry name" value="KduI_N"/>
</dbReference>
<dbReference type="InterPro" id="IPR014710">
    <property type="entry name" value="RmlC-like_jellyroll"/>
</dbReference>
<dbReference type="InterPro" id="IPR011051">
    <property type="entry name" value="RmlC_Cupin_sf"/>
</dbReference>
<dbReference type="NCBIfam" id="NF002091">
    <property type="entry name" value="PRK00924.1"/>
    <property type="match status" value="1"/>
</dbReference>
<dbReference type="PANTHER" id="PTHR38461">
    <property type="entry name" value="4-DEOXY-L-THREO-5-HEXOSULOSE-URONATE KETOL-ISOMERASE"/>
    <property type="match status" value="1"/>
</dbReference>
<dbReference type="PANTHER" id="PTHR38461:SF1">
    <property type="entry name" value="4-DEOXY-L-THREO-5-HEXOSULOSE-URONATE KETOL-ISOMERASE"/>
    <property type="match status" value="1"/>
</dbReference>
<dbReference type="Pfam" id="PF04962">
    <property type="entry name" value="KduI"/>
    <property type="match status" value="1"/>
</dbReference>
<dbReference type="PIRSF" id="PIRSF006625">
    <property type="entry name" value="KduI"/>
    <property type="match status" value="1"/>
</dbReference>
<dbReference type="SUPFAM" id="SSF51182">
    <property type="entry name" value="RmlC-like cupins"/>
    <property type="match status" value="1"/>
</dbReference>
<sequence length="277" mass="32408">MEIRYATNPRDFKNYDNERVREDFLINNLFEKGNINMVYSHYDRLIVGGAVPTNSPLHLEDKETLKTEYFLERREVGFFNISNNKGKITVDGEVYELDHRDCLYVGKENKNILIESIDSDNPARFYIVSATAHKNYPTQKKSLQEATHRHLGDDSQSNKRDLYQYIHADGIQSCQLMMGMTFLSENNMWNTMPPHIHDRRMEAYLYFDIDEDEKIMHFMGQPNDTRNIVVSNEQAVLSPPWSIHSGVGTKNYTFIWAMAGENYTFDDMDHVVKNQLK</sequence>
<feature type="chain" id="PRO_0000215492" description="4-deoxy-L-threo-5-hexosulose-uronate ketol-isomerase">
    <location>
        <begin position="1"/>
        <end position="277"/>
    </location>
</feature>
<feature type="binding site" evidence="1">
    <location>
        <position position="195"/>
    </location>
    <ligand>
        <name>Zn(2+)</name>
        <dbReference type="ChEBI" id="CHEBI:29105"/>
    </ligand>
</feature>
<feature type="binding site" evidence="1">
    <location>
        <position position="197"/>
    </location>
    <ligand>
        <name>Zn(2+)</name>
        <dbReference type="ChEBI" id="CHEBI:29105"/>
    </ligand>
</feature>
<feature type="binding site" evidence="1">
    <location>
        <position position="202"/>
    </location>
    <ligand>
        <name>Zn(2+)</name>
        <dbReference type="ChEBI" id="CHEBI:29105"/>
    </ligand>
</feature>
<feature type="binding site" evidence="1">
    <location>
        <position position="244"/>
    </location>
    <ligand>
        <name>Zn(2+)</name>
        <dbReference type="ChEBI" id="CHEBI:29105"/>
    </ligand>
</feature>
<accession>Q8EMM9</accession>
<organism>
    <name type="scientific">Oceanobacillus iheyensis (strain DSM 14371 / CIP 107618 / JCM 11309 / KCTC 3954 / HTE831)</name>
    <dbReference type="NCBI Taxonomy" id="221109"/>
    <lineage>
        <taxon>Bacteria</taxon>
        <taxon>Bacillati</taxon>
        <taxon>Bacillota</taxon>
        <taxon>Bacilli</taxon>
        <taxon>Bacillales</taxon>
        <taxon>Bacillaceae</taxon>
        <taxon>Oceanobacillus</taxon>
    </lineage>
</organism>
<reference key="1">
    <citation type="journal article" date="2002" name="Nucleic Acids Res.">
        <title>Genome sequence of Oceanobacillus iheyensis isolated from the Iheya Ridge and its unexpected adaptive capabilities to extreme environments.</title>
        <authorList>
            <person name="Takami H."/>
            <person name="Takaki Y."/>
            <person name="Uchiyama I."/>
        </authorList>
    </citation>
    <scope>NUCLEOTIDE SEQUENCE [LARGE SCALE GENOMIC DNA]</scope>
    <source>
        <strain>DSM 14371 / CIP 107618 / JCM 11309 / KCTC 3954 / HTE831</strain>
    </source>
</reference>
<protein>
    <recommendedName>
        <fullName evidence="1">4-deoxy-L-threo-5-hexosulose-uronate ketol-isomerase</fullName>
        <ecNumber evidence="1">5.3.1.17</ecNumber>
    </recommendedName>
    <alternativeName>
        <fullName evidence="1">5-keto-4-deoxyuronate isomerase</fullName>
    </alternativeName>
    <alternativeName>
        <fullName evidence="1">DKI isomerase</fullName>
    </alternativeName>
</protein>
<name>KDUI_OCEIH</name>
<keyword id="KW-0413">Isomerase</keyword>
<keyword id="KW-0479">Metal-binding</keyword>
<keyword id="KW-1185">Reference proteome</keyword>
<keyword id="KW-0862">Zinc</keyword>